<dbReference type="EMBL" id="X04465">
    <property type="protein sequence ID" value="CAA28122.1"/>
    <property type="molecule type" value="Genomic_DNA"/>
</dbReference>
<dbReference type="PIR" id="A02790">
    <property type="entry name" value="R5LV14"/>
</dbReference>
<dbReference type="RefSeq" id="NP_039336.1">
    <property type="nucleotide sequence ID" value="NC_001319.1"/>
</dbReference>
<dbReference type="RefSeq" id="YP_009646849.1">
    <property type="nucleotide sequence ID" value="NC_042505.1"/>
</dbReference>
<dbReference type="SMR" id="P06381"/>
<dbReference type="GeneID" id="2702569"/>
<dbReference type="GeneID" id="40386719"/>
<dbReference type="GO" id="GO:0009507">
    <property type="term" value="C:chloroplast"/>
    <property type="evidence" value="ECO:0007669"/>
    <property type="project" value="UniProtKB-SubCell"/>
</dbReference>
<dbReference type="GO" id="GO:0015934">
    <property type="term" value="C:large ribosomal subunit"/>
    <property type="evidence" value="ECO:0007669"/>
    <property type="project" value="InterPro"/>
</dbReference>
<dbReference type="GO" id="GO:0019843">
    <property type="term" value="F:rRNA binding"/>
    <property type="evidence" value="ECO:0007669"/>
    <property type="project" value="UniProtKB-UniRule"/>
</dbReference>
<dbReference type="GO" id="GO:0003735">
    <property type="term" value="F:structural constituent of ribosome"/>
    <property type="evidence" value="ECO:0007669"/>
    <property type="project" value="InterPro"/>
</dbReference>
<dbReference type="GO" id="GO:0006412">
    <property type="term" value="P:translation"/>
    <property type="evidence" value="ECO:0007669"/>
    <property type="project" value="UniProtKB-UniRule"/>
</dbReference>
<dbReference type="CDD" id="cd00337">
    <property type="entry name" value="Ribosomal_uL14"/>
    <property type="match status" value="1"/>
</dbReference>
<dbReference type="FunFam" id="2.40.150.20:FF:000002">
    <property type="entry name" value="50S ribosomal protein L14, chloroplastic"/>
    <property type="match status" value="1"/>
</dbReference>
<dbReference type="Gene3D" id="2.40.150.20">
    <property type="entry name" value="Ribosomal protein L14"/>
    <property type="match status" value="1"/>
</dbReference>
<dbReference type="HAMAP" id="MF_01367">
    <property type="entry name" value="Ribosomal_uL14"/>
    <property type="match status" value="1"/>
</dbReference>
<dbReference type="InterPro" id="IPR000218">
    <property type="entry name" value="Ribosomal_uL14"/>
</dbReference>
<dbReference type="InterPro" id="IPR005745">
    <property type="entry name" value="Ribosomal_uL14_bac-type"/>
</dbReference>
<dbReference type="InterPro" id="IPR019972">
    <property type="entry name" value="Ribosomal_uL14_CS"/>
</dbReference>
<dbReference type="InterPro" id="IPR036853">
    <property type="entry name" value="Ribosomal_uL14_sf"/>
</dbReference>
<dbReference type="NCBIfam" id="TIGR01067">
    <property type="entry name" value="rplN_bact"/>
    <property type="match status" value="1"/>
</dbReference>
<dbReference type="PANTHER" id="PTHR11761">
    <property type="entry name" value="50S/60S RIBOSOMAL PROTEIN L14/L23"/>
    <property type="match status" value="1"/>
</dbReference>
<dbReference type="PANTHER" id="PTHR11761:SF3">
    <property type="entry name" value="LARGE RIBOSOMAL SUBUNIT PROTEIN UL14M"/>
    <property type="match status" value="1"/>
</dbReference>
<dbReference type="Pfam" id="PF00238">
    <property type="entry name" value="Ribosomal_L14"/>
    <property type="match status" value="1"/>
</dbReference>
<dbReference type="SMART" id="SM01374">
    <property type="entry name" value="Ribosomal_L14"/>
    <property type="match status" value="1"/>
</dbReference>
<dbReference type="SUPFAM" id="SSF50193">
    <property type="entry name" value="Ribosomal protein L14"/>
    <property type="match status" value="1"/>
</dbReference>
<dbReference type="PROSITE" id="PS00049">
    <property type="entry name" value="RIBOSOMAL_L14"/>
    <property type="match status" value="1"/>
</dbReference>
<reference key="1">
    <citation type="journal article" date="1988" name="J. Mol. Biol.">
        <title>Structure and organization of Marchantia polymorpha chloroplast genome. III. Gene organization of the large single copy region from rbcL to trnI(CAU).</title>
        <authorList>
            <person name="Fukuzawa H."/>
            <person name="Kohchi T."/>
            <person name="Sano T."/>
            <person name="Shirai H."/>
            <person name="Umesono K."/>
            <person name="Inokuchi H."/>
            <person name="Ozeki H."/>
            <person name="Ohyama K."/>
        </authorList>
    </citation>
    <scope>NUCLEOTIDE SEQUENCE [GENOMIC DNA]</scope>
</reference>
<reference key="2">
    <citation type="journal article" date="1986" name="Nature">
        <title>Chloroplast gene organization deduced from complete sequence of liverwort Marchantia polymorpha chloroplast DNA.</title>
        <authorList>
            <person name="Ohyama K."/>
            <person name="Fukuzawa H."/>
            <person name="Kohchi T."/>
            <person name="Shirai H."/>
            <person name="Sano T."/>
            <person name="Sano S."/>
            <person name="Umesono K."/>
            <person name="Shiki Y."/>
            <person name="Takeuchi M."/>
            <person name="Chang Z."/>
            <person name="Aota S."/>
            <person name="Inokuchi H."/>
            <person name="Ozeki H."/>
        </authorList>
    </citation>
    <scope>NUCLEOTIDE SEQUENCE [LARGE SCALE GENOMIC DNA]</scope>
</reference>
<geneLocation type="chloroplast"/>
<accession>P06381</accession>
<name>RK14_MARPO</name>
<gene>
    <name evidence="1" type="primary">rpl14</name>
</gene>
<keyword id="KW-0150">Chloroplast</keyword>
<keyword id="KW-0934">Plastid</keyword>
<keyword id="KW-0687">Ribonucleoprotein</keyword>
<keyword id="KW-0689">Ribosomal protein</keyword>
<keyword id="KW-0694">RNA-binding</keyword>
<keyword id="KW-0699">rRNA-binding</keyword>
<evidence type="ECO:0000255" key="1">
    <source>
        <dbReference type="HAMAP-Rule" id="MF_01367"/>
    </source>
</evidence>
<evidence type="ECO:0000305" key="2"/>
<proteinExistence type="inferred from homology"/>
<feature type="chain" id="PRO_0000128591" description="Large ribosomal subunit protein uL14c">
    <location>
        <begin position="1"/>
        <end position="122"/>
    </location>
</feature>
<protein>
    <recommendedName>
        <fullName evidence="1">Large ribosomal subunit protein uL14c</fullName>
    </recommendedName>
    <alternativeName>
        <fullName evidence="2">50S ribosomal protein L14, chloroplastic</fullName>
    </alternativeName>
</protein>
<organism>
    <name type="scientific">Marchantia polymorpha</name>
    <name type="common">Common liverwort</name>
    <name type="synonym">Marchantia aquatica</name>
    <dbReference type="NCBI Taxonomy" id="3197"/>
    <lineage>
        <taxon>Eukaryota</taxon>
        <taxon>Viridiplantae</taxon>
        <taxon>Streptophyta</taxon>
        <taxon>Embryophyta</taxon>
        <taxon>Marchantiophyta</taxon>
        <taxon>Marchantiopsida</taxon>
        <taxon>Marchantiidae</taxon>
        <taxon>Marchantiales</taxon>
        <taxon>Marchantiaceae</taxon>
        <taxon>Marchantia</taxon>
    </lineage>
</organism>
<comment type="function">
    <text evidence="1">Binds to 23S rRNA.</text>
</comment>
<comment type="subunit">
    <text evidence="1">Part of the 50S ribosomal subunit.</text>
</comment>
<comment type="subcellular location">
    <subcellularLocation>
        <location>Plastid</location>
        <location>Chloroplast</location>
    </subcellularLocation>
</comment>
<comment type="similarity">
    <text evidence="1">Belongs to the universal ribosomal protein uL14 family.</text>
</comment>
<sequence>MIQPQTYLNVADNSGARKLMCIRVIGTSNRKYANIGDIIIAVVKEAVPNMPIKKSEIVRAVIVRTCKEFKRNNGSIIKFDDNAAVVINQEGNPKGTRVFGPIARELRESNFTKIVSLAPEVL</sequence>